<dbReference type="EMBL" id="CP001956">
    <property type="protein sequence ID" value="ADE03549.1"/>
    <property type="molecule type" value="Genomic_DNA"/>
</dbReference>
<dbReference type="RefSeq" id="WP_004043650.1">
    <property type="nucleotide sequence ID" value="NC_013967.1"/>
</dbReference>
<dbReference type="SMR" id="D4GXC5"/>
<dbReference type="PaxDb" id="309800-C498_12298"/>
<dbReference type="EnsemblBacteria" id="ADE03549">
    <property type="protein sequence ID" value="ADE03549"/>
    <property type="gene ID" value="HVO_1289"/>
</dbReference>
<dbReference type="GeneID" id="8924591"/>
<dbReference type="KEGG" id="hvo:HVO_1289"/>
<dbReference type="eggNOG" id="arCOG03687">
    <property type="taxonomic scope" value="Archaea"/>
</dbReference>
<dbReference type="HOGENOM" id="CLU_1912282_0_0_2"/>
<dbReference type="OrthoDB" id="237916at2157"/>
<dbReference type="Proteomes" id="UP000008243">
    <property type="component" value="Chromosome"/>
</dbReference>
<dbReference type="Gene3D" id="3.30.300.20">
    <property type="match status" value="1"/>
</dbReference>
<dbReference type="InterPro" id="IPR015946">
    <property type="entry name" value="KH_dom-like_a/b"/>
</dbReference>
<dbReference type="InterPro" id="IPR003718">
    <property type="entry name" value="OsmC/Ohr_fam"/>
</dbReference>
<dbReference type="InterPro" id="IPR036102">
    <property type="entry name" value="OsmC/Ohrsf"/>
</dbReference>
<dbReference type="Pfam" id="PF02566">
    <property type="entry name" value="OsmC"/>
    <property type="match status" value="1"/>
</dbReference>
<dbReference type="SUPFAM" id="SSF82784">
    <property type="entry name" value="OsmC-like"/>
    <property type="match status" value="1"/>
</dbReference>
<keyword id="KW-1017">Isopeptide bond</keyword>
<keyword id="KW-1185">Reference proteome</keyword>
<keyword id="KW-0832">Ubl conjugation</keyword>
<name>Y1289_HALVD</name>
<evidence type="ECO:0000305" key="1"/>
<reference key="1">
    <citation type="journal article" date="2010" name="PLoS ONE">
        <title>The complete genome sequence of Haloferax volcanii DS2, a model archaeon.</title>
        <authorList>
            <person name="Hartman A.L."/>
            <person name="Norais C."/>
            <person name="Badger J.H."/>
            <person name="Delmas S."/>
            <person name="Haldenby S."/>
            <person name="Madupu R."/>
            <person name="Robinson J."/>
            <person name="Khouri H."/>
            <person name="Ren Q."/>
            <person name="Lowe T.M."/>
            <person name="Maupin-Furlow J."/>
            <person name="Pohlschroder M."/>
            <person name="Daniels C."/>
            <person name="Pfeiffer F."/>
            <person name="Allers T."/>
            <person name="Eisen J.A."/>
        </authorList>
    </citation>
    <scope>NUCLEOTIDE SEQUENCE [LARGE SCALE GENOMIC DNA]</scope>
    <source>
        <strain>ATCC 29605 / DSM 3757 / JCM 8879 / NBRC 14742 / NCIMB 2012 / VKM B-1768 / DS2</strain>
    </source>
</reference>
<reference key="2">
    <citation type="journal article" date="2010" name="Nature">
        <title>Ubiquitin-like small archaeal modifier proteins (SAMPs) in Haloferax volcanii.</title>
        <authorList>
            <person name="Humbard M.A."/>
            <person name="Miranda H.V."/>
            <person name="Lim J.M."/>
            <person name="Krause D.J."/>
            <person name="Pritz J.R."/>
            <person name="Zhou G."/>
            <person name="Chen S."/>
            <person name="Wells L."/>
            <person name="Maupin-Furlow J.A."/>
        </authorList>
    </citation>
    <scope>SAMPYLATION AT LYS-59</scope>
    <scope>IDENTIFICATION BY MASS SPECTROMETRY</scope>
</reference>
<organism>
    <name type="scientific">Haloferax volcanii (strain ATCC 29605 / DSM 3757 / JCM 8879 / NBRC 14742 / NCIMB 2012 / VKM B-1768 / DS2)</name>
    <name type="common">Halobacterium volcanii</name>
    <dbReference type="NCBI Taxonomy" id="309800"/>
    <lineage>
        <taxon>Archaea</taxon>
        <taxon>Methanobacteriati</taxon>
        <taxon>Methanobacteriota</taxon>
        <taxon>Stenosarchaea group</taxon>
        <taxon>Halobacteria</taxon>
        <taxon>Halobacteriales</taxon>
        <taxon>Haloferacaceae</taxon>
        <taxon>Haloferax</taxon>
    </lineage>
</organism>
<comment type="similarity">
    <text evidence="1">Belongs to the OsmC/Ohr family.</text>
</comment>
<accession>D4GXC5</accession>
<sequence>MSDIQTSTVSEDGFACTSQVGDFDLQIDATDETGPNPNAALVATYASCFLPAFRVGGQKTGFDDLGKVQIDADADLDDSDDLERISFDVYVESDLSDDEFAEITELAEDICHVHDALRDELQADVTVVGDAF</sequence>
<protein>
    <recommendedName>
        <fullName>Uncharacterized protein HVO_1289</fullName>
    </recommendedName>
</protein>
<gene>
    <name type="ordered locus">HVO_1289</name>
</gene>
<feature type="chain" id="PRO_0000397109" description="Uncharacterized protein HVO_1289">
    <location>
        <begin position="1"/>
        <end position="132"/>
    </location>
</feature>
<feature type="cross-link" description="Glycyl lysine isopeptide (Lys-Gly) (interchain with G-Cter in SAMP2)">
    <location>
        <position position="59"/>
    </location>
</feature>
<proteinExistence type="evidence at protein level"/>